<protein>
    <recommendedName>
        <fullName>Oligo-1,6-glucosidase IMA3</fullName>
        <ecNumber>3.2.1.10</ecNumber>
    </recommendedName>
    <alternativeName>
        <fullName>Alpha-glucosidase</fullName>
    </alternativeName>
    <alternativeName>
        <fullName>Isomaltase 3</fullName>
    </alternativeName>
</protein>
<evidence type="ECO:0000250" key="1"/>
<evidence type="ECO:0000269" key="2">
    <source>
    </source>
</evidence>
<evidence type="ECO:0000269" key="3">
    <source>
    </source>
</evidence>
<evidence type="ECO:0000269" key="4">
    <source>
    </source>
</evidence>
<evidence type="ECO:0000305" key="5"/>
<feature type="chain" id="PRO_0000054332" description="Oligo-1,6-glucosidase IMA3">
    <location>
        <begin position="1"/>
        <end position="589"/>
    </location>
</feature>
<feature type="active site" description="Nucleophile" evidence="1">
    <location>
        <position position="215"/>
    </location>
</feature>
<feature type="active site" description="Proton donor" evidence="1">
    <location>
        <position position="277"/>
    </location>
</feature>
<feature type="site" description="Transition state stabilizer" evidence="1">
    <location>
        <position position="352"/>
    </location>
</feature>
<comment type="function">
    <text evidence="4">Alpha-glucosidase with broad substrate specificity for alpha-1,4- and alpha-1,6-glucosides. Not required for isomaltose utilization, but overexpression allows the IMA1 null mutant to grow on isomaltose.</text>
</comment>
<comment type="catalytic activity">
    <reaction>
        <text>Hydrolysis of (1-&gt;6)-alpha-D-glucosidic linkages in some oligosaccharides produced from starch and glycogen by alpha-amylase, and in isomaltose.</text>
        <dbReference type="EC" id="3.2.1.10"/>
    </reaction>
</comment>
<comment type="subcellular location">
    <subcellularLocation>
        <location evidence="2">Cytoplasm</location>
    </subcellularLocation>
</comment>
<comment type="miscellaneous">
    <text evidence="3">Present with 166 molecules/cell in log phase SD medium.</text>
</comment>
<comment type="similarity">
    <text evidence="5">Belongs to the glycosyl hydrolase 13 family.</text>
</comment>
<sequence>MTISSAHPETEPKWWKEATIYQIYPASFKDSNNDGWGDMKGIASKLEYIKELGTDAIWISPFYDSPQDDMGYDIANYEKVWPTYGTNEDCFALIEKTHKLGMKFITDLVINHCSSEHEWFKESRSSKTNPKRDWFFWRPPKGYDAEGKPIPPNNWRSYFGGSAWTFDEKTQEFYLRLFCSTQPDLNWENEDCRKAIYESAVGYWLDHGVDGFRIDVGSLYSKVAGLPDAPVIDENSKWQLSDPFTMNGPRIHEFHQEMNKFIRNRVKDGREIMTVGEMRHATDETKRLYTSASRHELSELFNFSHTDVGTSPKFRQNLIPYELKDWKVALAELFRYVNGTDCWSTIYLENHDQPRSITRFGDDSPKNRVISGKLLSVLLVSLSGTLYVYQGQELGEINFKNWPIEKYEDVEVRNNYDAIKEEHGENSKEMKRFLEAIALISRDHARTPMQWSREEPNAGFSGPNAKPWFYLNESFREGINAEDESKDPNSVLNFWKEALRFRKAHKDITVYGYDFEFIDLDNKKLFSFTKKYDNKTLFAALNFSSDSIDFTIPNNSSSFKLEFGNYPRSEVDASSRTLKPWEGRIYISE</sequence>
<reference key="1">
    <citation type="journal article" date="1997" name="Nature">
        <title>The nucleotide sequence of Saccharomyces cerevisiae chromosome IX.</title>
        <authorList>
            <person name="Churcher C.M."/>
            <person name="Bowman S."/>
            <person name="Badcock K."/>
            <person name="Bankier A.T."/>
            <person name="Brown D."/>
            <person name="Chillingworth T."/>
            <person name="Connor R."/>
            <person name="Devlin K."/>
            <person name="Gentles S."/>
            <person name="Hamlin N."/>
            <person name="Harris D.E."/>
            <person name="Horsnell T."/>
            <person name="Hunt S."/>
            <person name="Jagels K."/>
            <person name="Jones M."/>
            <person name="Lye G."/>
            <person name="Moule S."/>
            <person name="Odell C."/>
            <person name="Pearson D."/>
            <person name="Rajandream M.A."/>
            <person name="Rice P."/>
            <person name="Rowley N."/>
            <person name="Skelton J."/>
            <person name="Smith V."/>
            <person name="Walsh S.V."/>
            <person name="Whitehead S."/>
            <person name="Barrell B.G."/>
        </authorList>
    </citation>
    <scope>NUCLEOTIDE SEQUENCE [LARGE SCALE GENOMIC DNA]</scope>
    <source>
        <strain>ATCC 204508 / S288c</strain>
    </source>
</reference>
<reference key="2">
    <citation type="journal article" date="2014" name="G3 (Bethesda)">
        <title>The reference genome sequence of Saccharomyces cerevisiae: Then and now.</title>
        <authorList>
            <person name="Engel S.R."/>
            <person name="Dietrich F.S."/>
            <person name="Fisk D.G."/>
            <person name="Binkley G."/>
            <person name="Balakrishnan R."/>
            <person name="Costanzo M.C."/>
            <person name="Dwight S.S."/>
            <person name="Hitz B.C."/>
            <person name="Karra K."/>
            <person name="Nash R.S."/>
            <person name="Weng S."/>
            <person name="Wong E.D."/>
            <person name="Lloyd P."/>
            <person name="Skrzypek M.S."/>
            <person name="Miyasato S.R."/>
            <person name="Simison M."/>
            <person name="Cherry J.M."/>
        </authorList>
    </citation>
    <scope>GENOME REANNOTATION</scope>
    <source>
        <strain>ATCC 204508 / S288c</strain>
    </source>
</reference>
<reference key="3">
    <citation type="journal article" date="2003" name="Nature">
        <title>Global analysis of protein localization in budding yeast.</title>
        <authorList>
            <person name="Huh W.-K."/>
            <person name="Falvo J.V."/>
            <person name="Gerke L.C."/>
            <person name="Carroll A.S."/>
            <person name="Howson R.W."/>
            <person name="Weissman J.S."/>
            <person name="O'Shea E.K."/>
        </authorList>
    </citation>
    <scope>SUBCELLULAR LOCATION [LARGE SCALE ANALYSIS]</scope>
</reference>
<reference key="4">
    <citation type="journal article" date="2003" name="Nature">
        <title>Global analysis of protein expression in yeast.</title>
        <authorList>
            <person name="Ghaemmaghami S."/>
            <person name="Huh W.-K."/>
            <person name="Bower K."/>
            <person name="Howson R.W."/>
            <person name="Belle A."/>
            <person name="Dephoure N."/>
            <person name="O'Shea E.K."/>
            <person name="Weissman J.S."/>
        </authorList>
    </citation>
    <scope>LEVEL OF PROTEIN EXPRESSION [LARGE SCALE ANALYSIS]</scope>
</reference>
<reference key="5">
    <citation type="journal article" date="2010" name="J. Biol. Chem.">
        <title>Characterization of a new multigene family encoding isomaltases in the yeast Saccharomyces cerevisiae, the IMA family.</title>
        <authorList>
            <person name="Teste M.A."/>
            <person name="Francois J.M."/>
            <person name="Parrou J.L."/>
        </authorList>
    </citation>
    <scope>FUNCTION</scope>
</reference>
<name>MALX2_YEAST</name>
<dbReference type="EC" id="3.2.1.10"/>
<dbReference type="EMBL" id="Z46921">
    <property type="protein sequence ID" value="CAA87020.1"/>
    <property type="molecule type" value="Genomic_DNA"/>
</dbReference>
<dbReference type="EMBL" id="BK006942">
    <property type="protein sequence ID" value="DAA08385.1"/>
    <property type="molecule type" value="Genomic_DNA"/>
</dbReference>
<dbReference type="PIR" id="S50355">
    <property type="entry name" value="S50355"/>
</dbReference>
<dbReference type="RefSeq" id="NP_012096.1">
    <property type="nucleotide sequence ID" value="NM_001179518.1"/>
</dbReference>
<dbReference type="SMR" id="P0CW40"/>
<dbReference type="BioGRID" id="33561">
    <property type="interactions" value="14"/>
</dbReference>
<dbReference type="BioGRID" id="34824">
    <property type="interactions" value="5"/>
</dbReference>
<dbReference type="FunCoup" id="P0CW40">
    <property type="interactions" value="1133"/>
</dbReference>
<dbReference type="STRING" id="4932.YIL172C"/>
<dbReference type="CAZy" id="GH13">
    <property type="family name" value="Glycoside Hydrolase Family 13"/>
</dbReference>
<dbReference type="PaxDb" id="4932-YIL172C"/>
<dbReference type="PeptideAtlas" id="P0CW40"/>
<dbReference type="EnsemblFungi" id="YIL172C_mRNA">
    <property type="protein sequence ID" value="YIL172C"/>
    <property type="gene ID" value="YIL172C"/>
</dbReference>
<dbReference type="EnsemblFungi" id="YJL221C_mRNA">
    <property type="protein sequence ID" value="YJL221C"/>
    <property type="gene ID" value="YJL221C"/>
</dbReference>
<dbReference type="GeneID" id="854635"/>
<dbReference type="KEGG" id="sce:YIL172C"/>
<dbReference type="KEGG" id="sce:YJL221C"/>
<dbReference type="AGR" id="SGD:S000001434"/>
<dbReference type="SGD" id="S000001434">
    <property type="gene designation" value="IMA3"/>
</dbReference>
<dbReference type="VEuPathDB" id="FungiDB:YIL172C"/>
<dbReference type="VEuPathDB" id="FungiDB:YJL221C"/>
<dbReference type="eggNOG" id="KOG0471">
    <property type="taxonomic scope" value="Eukaryota"/>
</dbReference>
<dbReference type="HOGENOM" id="CLU_006462_1_1_1"/>
<dbReference type="InParanoid" id="P0CW40"/>
<dbReference type="OMA" id="MNNHDVP"/>
<dbReference type="OrthoDB" id="1740265at2759"/>
<dbReference type="BioCyc" id="YEAST:YIL172C-MONOMER"/>
<dbReference type="BRENDA" id="3.2.1.10">
    <property type="organism ID" value="984"/>
</dbReference>
<dbReference type="Reactome" id="R-SCE-352230">
    <property type="pathway name" value="Amino acid transport across the plasma membrane"/>
</dbReference>
<dbReference type="PRO" id="PR:P0CW40"/>
<dbReference type="Proteomes" id="UP000002311">
    <property type="component" value="Chromosome IX"/>
</dbReference>
<dbReference type="RNAct" id="P0CW40">
    <property type="molecule type" value="protein"/>
</dbReference>
<dbReference type="GO" id="GO:0005737">
    <property type="term" value="C:cytoplasm"/>
    <property type="evidence" value="ECO:0007005"/>
    <property type="project" value="SGD"/>
</dbReference>
<dbReference type="GO" id="GO:0004558">
    <property type="term" value="F:alpha-1,4-glucosidase activity"/>
    <property type="evidence" value="ECO:0000318"/>
    <property type="project" value="GO_Central"/>
</dbReference>
<dbReference type="GO" id="GO:0004556">
    <property type="term" value="F:alpha-amylase activity"/>
    <property type="evidence" value="ECO:0000318"/>
    <property type="project" value="GO_Central"/>
</dbReference>
<dbReference type="GO" id="GO:0033934">
    <property type="term" value="F:glucan 1,4-alpha-maltotriohydrolase activity"/>
    <property type="evidence" value="ECO:0000318"/>
    <property type="project" value="GO_Central"/>
</dbReference>
<dbReference type="GO" id="GO:0004574">
    <property type="term" value="F:oligo-1,6-glucosidase activity"/>
    <property type="evidence" value="ECO:0000314"/>
    <property type="project" value="SGD"/>
</dbReference>
<dbReference type="GO" id="GO:0004575">
    <property type="term" value="F:sucrose alpha-glucosidase activity"/>
    <property type="evidence" value="ECO:0000314"/>
    <property type="project" value="SGD"/>
</dbReference>
<dbReference type="GO" id="GO:0046352">
    <property type="term" value="P:disaccharide catabolic process"/>
    <property type="evidence" value="ECO:0000316"/>
    <property type="project" value="SGD"/>
</dbReference>
<dbReference type="GO" id="GO:0000025">
    <property type="term" value="P:maltose catabolic process"/>
    <property type="evidence" value="ECO:0000318"/>
    <property type="project" value="GO_Central"/>
</dbReference>
<dbReference type="GO" id="GO:0005987">
    <property type="term" value="P:sucrose catabolic process"/>
    <property type="evidence" value="ECO:0000318"/>
    <property type="project" value="GO_Central"/>
</dbReference>
<dbReference type="CDD" id="cd11333">
    <property type="entry name" value="AmyAc_SI_OligoGlu_DGase"/>
    <property type="match status" value="1"/>
</dbReference>
<dbReference type="FunFam" id="3.20.20.80:FF:000064">
    <property type="entry name" value="Oligo-1,6-glucosidase"/>
    <property type="match status" value="1"/>
</dbReference>
<dbReference type="FunFam" id="3.90.400.10:FF:000004">
    <property type="entry name" value="Oligo-1,6-glucosidase"/>
    <property type="match status" value="1"/>
</dbReference>
<dbReference type="FunFam" id="2.60.40.1180:FF:000027">
    <property type="entry name" value="Oligo-1,6-glucosidase IMA1"/>
    <property type="match status" value="1"/>
</dbReference>
<dbReference type="FunFam" id="3.20.20.80:FF:000087">
    <property type="entry name" value="Oligo-1,6-glucosidase IMA1"/>
    <property type="match status" value="1"/>
</dbReference>
<dbReference type="Gene3D" id="3.20.20.80">
    <property type="entry name" value="Glycosidases"/>
    <property type="match status" value="2"/>
</dbReference>
<dbReference type="Gene3D" id="2.60.40.1180">
    <property type="entry name" value="Golgi alpha-mannosidase II"/>
    <property type="match status" value="1"/>
</dbReference>
<dbReference type="Gene3D" id="3.90.400.10">
    <property type="entry name" value="Oligo-1,6-glucosidase, Domain 2"/>
    <property type="match status" value="1"/>
</dbReference>
<dbReference type="InterPro" id="IPR006047">
    <property type="entry name" value="Glyco_hydro_13_cat_dom"/>
</dbReference>
<dbReference type="InterPro" id="IPR013780">
    <property type="entry name" value="Glyco_hydro_b"/>
</dbReference>
<dbReference type="InterPro" id="IPR017853">
    <property type="entry name" value="Glycoside_hydrolase_SF"/>
</dbReference>
<dbReference type="InterPro" id="IPR045857">
    <property type="entry name" value="O16G_dom_2"/>
</dbReference>
<dbReference type="PANTHER" id="PTHR10357">
    <property type="entry name" value="ALPHA-AMYLASE FAMILY MEMBER"/>
    <property type="match status" value="1"/>
</dbReference>
<dbReference type="PANTHER" id="PTHR10357:SF179">
    <property type="entry name" value="NEUTRAL AND BASIC AMINO ACID TRANSPORT PROTEIN RBAT"/>
    <property type="match status" value="1"/>
</dbReference>
<dbReference type="Pfam" id="PF00128">
    <property type="entry name" value="Alpha-amylase"/>
    <property type="match status" value="1"/>
</dbReference>
<dbReference type="SMART" id="SM00642">
    <property type="entry name" value="Aamy"/>
    <property type="match status" value="1"/>
</dbReference>
<dbReference type="SUPFAM" id="SSF51445">
    <property type="entry name" value="(Trans)glycosidases"/>
    <property type="match status" value="1"/>
</dbReference>
<dbReference type="SUPFAM" id="SSF51011">
    <property type="entry name" value="Glycosyl hydrolase domain"/>
    <property type="match status" value="1"/>
</dbReference>
<accession>P0CW40</accession>
<accession>D6VVX6</accession>
<accession>P40439</accession>
<proteinExistence type="evidence at protein level"/>
<keyword id="KW-0963">Cytoplasm</keyword>
<keyword id="KW-0326">Glycosidase</keyword>
<keyword id="KW-0378">Hydrolase</keyword>
<keyword id="KW-0462">Maltose metabolism</keyword>
<keyword id="KW-1185">Reference proteome</keyword>
<organism>
    <name type="scientific">Saccharomyces cerevisiae (strain ATCC 204508 / S288c)</name>
    <name type="common">Baker's yeast</name>
    <dbReference type="NCBI Taxonomy" id="559292"/>
    <lineage>
        <taxon>Eukaryota</taxon>
        <taxon>Fungi</taxon>
        <taxon>Dikarya</taxon>
        <taxon>Ascomycota</taxon>
        <taxon>Saccharomycotina</taxon>
        <taxon>Saccharomycetes</taxon>
        <taxon>Saccharomycetales</taxon>
        <taxon>Saccharomycetaceae</taxon>
        <taxon>Saccharomyces</taxon>
    </lineage>
</organism>
<gene>
    <name type="primary">IMA3</name>
    <name type="ordered locus">YIL172C</name>
</gene>